<keyword id="KW-1185">Reference proteome</keyword>
<keyword id="KW-0687">Ribonucleoprotein</keyword>
<keyword id="KW-0689">Ribosomal protein</keyword>
<keyword id="KW-0694">RNA-binding</keyword>
<keyword id="KW-0699">rRNA-binding</keyword>
<sequence length="203" mass="22311">MSIKLTATTRTDLGKGASRRLRHADLVPAIVYGADKEAVSLTFTHKDIIKAEGIEAFYSSVLDLEIDGVSEQVVLKDLQRHAFKARIQHLDLLRVDAKHKLHTTVPLHFINEGLSEAIKNGGIVYRTINEVEVLCLPKDLPSFIEVDISTMEIGDTLHLSNITLPAGVESVELNKGEEHDLPMVSIALSKKAPAEEIEAETAE</sequence>
<gene>
    <name evidence="1" type="primary">rplY</name>
    <name evidence="1" type="synonym">ctc</name>
    <name type="ordered locus">Ping_0910</name>
</gene>
<feature type="chain" id="PRO_1000142550" description="Large ribosomal subunit protein bL25">
    <location>
        <begin position="1"/>
        <end position="203"/>
    </location>
</feature>
<name>RL25_PSYIN</name>
<protein>
    <recommendedName>
        <fullName evidence="1">Large ribosomal subunit protein bL25</fullName>
    </recommendedName>
    <alternativeName>
        <fullName evidence="2">50S ribosomal protein L25</fullName>
    </alternativeName>
    <alternativeName>
        <fullName evidence="1">General stress protein CTC</fullName>
    </alternativeName>
</protein>
<comment type="function">
    <text evidence="1">This is one of the proteins that binds to the 5S RNA in the ribosome where it forms part of the central protuberance.</text>
</comment>
<comment type="subunit">
    <text evidence="1">Part of the 50S ribosomal subunit; part of the 5S rRNA/L5/L18/L25 subcomplex. Contacts the 5S rRNA. Binds to the 5S rRNA independently of L5 and L18.</text>
</comment>
<comment type="similarity">
    <text evidence="1">Belongs to the bacterial ribosomal protein bL25 family. CTC subfamily.</text>
</comment>
<organism>
    <name type="scientific">Psychromonas ingrahamii (strain DSM 17664 / CCUG 51855 / 37)</name>
    <dbReference type="NCBI Taxonomy" id="357804"/>
    <lineage>
        <taxon>Bacteria</taxon>
        <taxon>Pseudomonadati</taxon>
        <taxon>Pseudomonadota</taxon>
        <taxon>Gammaproteobacteria</taxon>
        <taxon>Alteromonadales</taxon>
        <taxon>Psychromonadaceae</taxon>
        <taxon>Psychromonas</taxon>
    </lineage>
</organism>
<reference key="1">
    <citation type="journal article" date="2008" name="BMC Genomics">
        <title>Genomics of an extreme psychrophile, Psychromonas ingrahamii.</title>
        <authorList>
            <person name="Riley M."/>
            <person name="Staley J.T."/>
            <person name="Danchin A."/>
            <person name="Wang T.Z."/>
            <person name="Brettin T.S."/>
            <person name="Hauser L.J."/>
            <person name="Land M.L."/>
            <person name="Thompson L.S."/>
        </authorList>
    </citation>
    <scope>NUCLEOTIDE SEQUENCE [LARGE SCALE GENOMIC DNA]</scope>
    <source>
        <strain>DSM 17664 / CCUG 51855 / 37</strain>
    </source>
</reference>
<dbReference type="EMBL" id="CP000510">
    <property type="protein sequence ID" value="ABM02752.1"/>
    <property type="molecule type" value="Genomic_DNA"/>
</dbReference>
<dbReference type="RefSeq" id="WP_011769315.1">
    <property type="nucleotide sequence ID" value="NC_008709.1"/>
</dbReference>
<dbReference type="SMR" id="A1STD7"/>
<dbReference type="STRING" id="357804.Ping_0910"/>
<dbReference type="KEGG" id="pin:Ping_0910"/>
<dbReference type="eggNOG" id="COG1825">
    <property type="taxonomic scope" value="Bacteria"/>
</dbReference>
<dbReference type="HOGENOM" id="CLU_075939_0_1_6"/>
<dbReference type="OrthoDB" id="9806411at2"/>
<dbReference type="Proteomes" id="UP000000639">
    <property type="component" value="Chromosome"/>
</dbReference>
<dbReference type="GO" id="GO:0022625">
    <property type="term" value="C:cytosolic large ribosomal subunit"/>
    <property type="evidence" value="ECO:0007669"/>
    <property type="project" value="TreeGrafter"/>
</dbReference>
<dbReference type="GO" id="GO:0008097">
    <property type="term" value="F:5S rRNA binding"/>
    <property type="evidence" value="ECO:0007669"/>
    <property type="project" value="InterPro"/>
</dbReference>
<dbReference type="GO" id="GO:0003735">
    <property type="term" value="F:structural constituent of ribosome"/>
    <property type="evidence" value="ECO:0007669"/>
    <property type="project" value="InterPro"/>
</dbReference>
<dbReference type="GO" id="GO:0006412">
    <property type="term" value="P:translation"/>
    <property type="evidence" value="ECO:0007669"/>
    <property type="project" value="UniProtKB-UniRule"/>
</dbReference>
<dbReference type="CDD" id="cd00495">
    <property type="entry name" value="Ribosomal_L25_TL5_CTC"/>
    <property type="match status" value="1"/>
</dbReference>
<dbReference type="FunFam" id="2.40.240.10:FF:000002">
    <property type="entry name" value="50S ribosomal protein L25"/>
    <property type="match status" value="1"/>
</dbReference>
<dbReference type="Gene3D" id="2.170.120.20">
    <property type="entry name" value="Ribosomal protein L25, beta domain"/>
    <property type="match status" value="1"/>
</dbReference>
<dbReference type="Gene3D" id="2.40.240.10">
    <property type="entry name" value="Ribosomal Protein L25, Chain P"/>
    <property type="match status" value="1"/>
</dbReference>
<dbReference type="HAMAP" id="MF_01336">
    <property type="entry name" value="Ribosomal_bL25"/>
    <property type="match status" value="1"/>
</dbReference>
<dbReference type="HAMAP" id="MF_01334">
    <property type="entry name" value="Ribosomal_bL25_CTC"/>
    <property type="match status" value="1"/>
</dbReference>
<dbReference type="InterPro" id="IPR020056">
    <property type="entry name" value="Rbsml_bL25/Gln-tRNA_synth_N"/>
</dbReference>
<dbReference type="InterPro" id="IPR011035">
    <property type="entry name" value="Ribosomal_bL25/Gln-tRNA_synth"/>
</dbReference>
<dbReference type="InterPro" id="IPR020057">
    <property type="entry name" value="Ribosomal_bL25_b-dom"/>
</dbReference>
<dbReference type="InterPro" id="IPR037121">
    <property type="entry name" value="Ribosomal_bL25_C"/>
</dbReference>
<dbReference type="InterPro" id="IPR001021">
    <property type="entry name" value="Ribosomal_bL25_long"/>
</dbReference>
<dbReference type="InterPro" id="IPR020055">
    <property type="entry name" value="Ribosomal_bL25_short"/>
</dbReference>
<dbReference type="InterPro" id="IPR029751">
    <property type="entry name" value="Ribosomal_L25_dom"/>
</dbReference>
<dbReference type="InterPro" id="IPR020930">
    <property type="entry name" value="Ribosomal_uL5_bac-type"/>
</dbReference>
<dbReference type="NCBIfam" id="TIGR00731">
    <property type="entry name" value="bL25_bact_ctc"/>
    <property type="match status" value="1"/>
</dbReference>
<dbReference type="NCBIfam" id="NF004130">
    <property type="entry name" value="PRK05618.1-5"/>
    <property type="match status" value="1"/>
</dbReference>
<dbReference type="NCBIfam" id="NF004612">
    <property type="entry name" value="PRK05943.1"/>
    <property type="match status" value="1"/>
</dbReference>
<dbReference type="PANTHER" id="PTHR33284">
    <property type="entry name" value="RIBOSOMAL PROTEIN L25/GLN-TRNA SYNTHETASE, ANTI-CODON-BINDING DOMAIN-CONTAINING PROTEIN"/>
    <property type="match status" value="1"/>
</dbReference>
<dbReference type="PANTHER" id="PTHR33284:SF1">
    <property type="entry name" value="RIBOSOMAL PROTEIN L25_GLN-TRNA SYNTHETASE, ANTI-CODON-BINDING DOMAIN-CONTAINING PROTEIN"/>
    <property type="match status" value="1"/>
</dbReference>
<dbReference type="Pfam" id="PF01386">
    <property type="entry name" value="Ribosomal_L25p"/>
    <property type="match status" value="1"/>
</dbReference>
<dbReference type="Pfam" id="PF14693">
    <property type="entry name" value="Ribosomal_TL5_C"/>
    <property type="match status" value="1"/>
</dbReference>
<dbReference type="SUPFAM" id="SSF50715">
    <property type="entry name" value="Ribosomal protein L25-like"/>
    <property type="match status" value="1"/>
</dbReference>
<evidence type="ECO:0000255" key="1">
    <source>
        <dbReference type="HAMAP-Rule" id="MF_01334"/>
    </source>
</evidence>
<evidence type="ECO:0000305" key="2"/>
<accession>A1STD7</accession>
<proteinExistence type="inferred from homology"/>